<sequence>MLPRNATDKIQGNVSKPCFWKSLSPGQNWKSKSMRSFPEEFVKSTPGAFEHRVVFSVRWGNSWQLWLEREEKDLFMIEEDWDEFVDDNHLGPNDNVFFRHDDKMFLEVQIFKNDGNEIIDAPPEVEPETEPFHPTTPKNSHKETTTASASASASEFSDNWRETHGCADIKNPELYLLNPKNPYFVKTLTKGNDVLYVPKTVIKKYGLKFGPHLSPMHYLLPGDKINGSTKIYGGGSAPCFNGWVDLCRKYNLKTGDSMVCELERSGELVTAVRVHFINKT</sequence>
<dbReference type="EMBL" id="AC006601">
    <property type="status" value="NOT_ANNOTATED_CDS"/>
    <property type="molecule type" value="Genomic_DNA"/>
</dbReference>
<dbReference type="EMBL" id="CP002688">
    <property type="protein sequence ID" value="AED93447.1"/>
    <property type="molecule type" value="Genomic_DNA"/>
</dbReference>
<dbReference type="EMBL" id="CP002688">
    <property type="protein sequence ID" value="AED93448.1"/>
    <property type="molecule type" value="Genomic_DNA"/>
</dbReference>
<dbReference type="EMBL" id="CP002688">
    <property type="protein sequence ID" value="ANM70434.1"/>
    <property type="molecule type" value="Genomic_DNA"/>
</dbReference>
<dbReference type="EMBL" id="DQ446982">
    <property type="protein sequence ID" value="ABE66179.1"/>
    <property type="molecule type" value="mRNA"/>
</dbReference>
<dbReference type="EMBL" id="DQ653304">
    <property type="protein sequence ID" value="ABK28711.1"/>
    <property type="status" value="ALT_SEQ"/>
    <property type="molecule type" value="mRNA"/>
</dbReference>
<dbReference type="EMBL" id="AY086898">
    <property type="protein sequence ID" value="AAM63943.1"/>
    <property type="status" value="ALT_INIT"/>
    <property type="molecule type" value="mRNA"/>
</dbReference>
<dbReference type="RefSeq" id="NP_001318648.1">
    <property type="nucleotide sequence ID" value="NM_001343929.1"/>
</dbReference>
<dbReference type="RefSeq" id="NP_568472.1">
    <property type="nucleotide sequence ID" value="NM_122457.5"/>
</dbReference>
<dbReference type="RefSeq" id="NP_851074.1">
    <property type="nucleotide sequence ID" value="NM_180743.4"/>
</dbReference>
<dbReference type="SMR" id="Q1PDT6"/>
<dbReference type="BioGRID" id="17896">
    <property type="interactions" value="4"/>
</dbReference>
<dbReference type="FunCoup" id="Q1PDT6">
    <property type="interactions" value="3"/>
</dbReference>
<dbReference type="IntAct" id="Q1PDT6">
    <property type="interactions" value="3"/>
</dbReference>
<dbReference type="PaxDb" id="3702-AT5G25470.1"/>
<dbReference type="ProteomicsDB" id="242838"/>
<dbReference type="EnsemblPlants" id="AT5G25470.1">
    <property type="protein sequence ID" value="AT5G25470.1"/>
    <property type="gene ID" value="AT5G25470"/>
</dbReference>
<dbReference type="EnsemblPlants" id="AT5G25470.2">
    <property type="protein sequence ID" value="AT5G25470.2"/>
    <property type="gene ID" value="AT5G25470"/>
</dbReference>
<dbReference type="EnsemblPlants" id="AT5G25470.3">
    <property type="protein sequence ID" value="AT5G25470.3"/>
    <property type="gene ID" value="AT5G25470"/>
</dbReference>
<dbReference type="GeneID" id="832621"/>
<dbReference type="Gramene" id="AT5G25470.1">
    <property type="protein sequence ID" value="AT5G25470.1"/>
    <property type="gene ID" value="AT5G25470"/>
</dbReference>
<dbReference type="Gramene" id="AT5G25470.2">
    <property type="protein sequence ID" value="AT5G25470.2"/>
    <property type="gene ID" value="AT5G25470"/>
</dbReference>
<dbReference type="Gramene" id="AT5G25470.3">
    <property type="protein sequence ID" value="AT5G25470.3"/>
    <property type="gene ID" value="AT5G25470"/>
</dbReference>
<dbReference type="KEGG" id="ath:AT5G25470"/>
<dbReference type="Araport" id="AT5G25470"/>
<dbReference type="TAIR" id="AT5G25470"/>
<dbReference type="HOGENOM" id="CLU_080825_0_0_1"/>
<dbReference type="InParanoid" id="Q1PDT6"/>
<dbReference type="OMA" id="RETHGCA"/>
<dbReference type="PhylomeDB" id="Q1PDT6"/>
<dbReference type="PRO" id="PR:Q1PDT6"/>
<dbReference type="Proteomes" id="UP000006548">
    <property type="component" value="Chromosome 5"/>
</dbReference>
<dbReference type="ExpressionAtlas" id="Q1PDT6">
    <property type="expression patterns" value="baseline and differential"/>
</dbReference>
<dbReference type="GO" id="GO:0005634">
    <property type="term" value="C:nucleus"/>
    <property type="evidence" value="ECO:0007669"/>
    <property type="project" value="UniProtKB-SubCell"/>
</dbReference>
<dbReference type="GO" id="GO:0003677">
    <property type="term" value="F:DNA binding"/>
    <property type="evidence" value="ECO:0007669"/>
    <property type="project" value="UniProtKB-KW"/>
</dbReference>
<dbReference type="CDD" id="cd10017">
    <property type="entry name" value="B3_DNA"/>
    <property type="match status" value="1"/>
</dbReference>
<dbReference type="Gene3D" id="2.40.330.10">
    <property type="entry name" value="DNA-binding pseudobarrel domain"/>
    <property type="match status" value="2"/>
</dbReference>
<dbReference type="InterPro" id="IPR003340">
    <property type="entry name" value="B3_DNA-bd"/>
</dbReference>
<dbReference type="InterPro" id="IPR015300">
    <property type="entry name" value="DNA-bd_pseudobarrel_sf"/>
</dbReference>
<dbReference type="InterPro" id="IPR050655">
    <property type="entry name" value="Plant_B3_domain"/>
</dbReference>
<dbReference type="PANTHER" id="PTHR31920">
    <property type="entry name" value="B3 DOMAIN-CONTAINING"/>
    <property type="match status" value="1"/>
</dbReference>
<dbReference type="PANTHER" id="PTHR31920:SF125">
    <property type="entry name" value="TF-B3 DOMAIN-CONTAINING PROTEIN"/>
    <property type="match status" value="1"/>
</dbReference>
<dbReference type="Pfam" id="PF02362">
    <property type="entry name" value="B3"/>
    <property type="match status" value="1"/>
</dbReference>
<dbReference type="SMART" id="SM01019">
    <property type="entry name" value="B3"/>
    <property type="match status" value="2"/>
</dbReference>
<dbReference type="SUPFAM" id="SSF101936">
    <property type="entry name" value="DNA-binding pseudobarrel domain"/>
    <property type="match status" value="2"/>
</dbReference>
<dbReference type="PROSITE" id="PS50863">
    <property type="entry name" value="B3"/>
    <property type="match status" value="2"/>
</dbReference>
<accession>Q1PDT6</accession>
<accession>A0MFH8</accession>
<accession>Q8LC00</accession>
<comment type="subcellular location">
    <subcellularLocation>
        <location evidence="1">Nucleus</location>
    </subcellularLocation>
</comment>
<comment type="sequence caution" evidence="3">
    <conflict type="erroneous initiation">
        <sequence resource="EMBL-CDS" id="AAM63943"/>
    </conflict>
</comment>
<comment type="sequence caution" evidence="3">
    <conflict type="erroneous termination">
        <sequence resource="EMBL-CDS" id="ABK28711"/>
    </conflict>
    <text>Extended C-terminus.</text>
</comment>
<evidence type="ECO:0000255" key="1">
    <source>
        <dbReference type="PROSITE-ProRule" id="PRU00326"/>
    </source>
</evidence>
<evidence type="ECO:0000256" key="2">
    <source>
        <dbReference type="SAM" id="MobiDB-lite"/>
    </source>
</evidence>
<evidence type="ECO:0000305" key="3"/>
<name>Y5547_ARATH</name>
<gene>
    <name type="ordered locus">At5g25470</name>
    <name type="ORF">T14C9.20</name>
</gene>
<organism>
    <name type="scientific">Arabidopsis thaliana</name>
    <name type="common">Mouse-ear cress</name>
    <dbReference type="NCBI Taxonomy" id="3702"/>
    <lineage>
        <taxon>Eukaryota</taxon>
        <taxon>Viridiplantae</taxon>
        <taxon>Streptophyta</taxon>
        <taxon>Embryophyta</taxon>
        <taxon>Tracheophyta</taxon>
        <taxon>Spermatophyta</taxon>
        <taxon>Magnoliopsida</taxon>
        <taxon>eudicotyledons</taxon>
        <taxon>Gunneridae</taxon>
        <taxon>Pentapetalae</taxon>
        <taxon>rosids</taxon>
        <taxon>malvids</taxon>
        <taxon>Brassicales</taxon>
        <taxon>Brassicaceae</taxon>
        <taxon>Camelineae</taxon>
        <taxon>Arabidopsis</taxon>
    </lineage>
</organism>
<protein>
    <recommendedName>
        <fullName>B3 domain-containing protein At5g25470</fullName>
    </recommendedName>
</protein>
<keyword id="KW-0238">DNA-binding</keyword>
<keyword id="KW-0539">Nucleus</keyword>
<keyword id="KW-1185">Reference proteome</keyword>
<keyword id="KW-0677">Repeat</keyword>
<keyword id="KW-0804">Transcription</keyword>
<keyword id="KW-0805">Transcription regulation</keyword>
<feature type="chain" id="PRO_0000375156" description="B3 domain-containing protein At5g25470">
    <location>
        <begin position="1"/>
        <end position="280"/>
    </location>
</feature>
<feature type="DNA-binding region" description="TF-B3 1" evidence="1">
    <location>
        <begin position="20"/>
        <end position="114"/>
    </location>
</feature>
<feature type="DNA-binding region" description="TF-B3 2" evidence="1">
    <location>
        <begin position="183"/>
        <end position="276"/>
    </location>
</feature>
<feature type="region of interest" description="Disordered" evidence="2">
    <location>
        <begin position="122"/>
        <end position="153"/>
    </location>
</feature>
<feature type="sequence conflict" description="In Ref. 4; AAM63943." evidence="3" ref="4">
    <original>A</original>
    <variation>F</variation>
    <location>
        <position position="6"/>
    </location>
</feature>
<reference key="1">
    <citation type="journal article" date="2000" name="Nature">
        <title>Sequence and analysis of chromosome 5 of the plant Arabidopsis thaliana.</title>
        <authorList>
            <person name="Tabata S."/>
            <person name="Kaneko T."/>
            <person name="Nakamura Y."/>
            <person name="Kotani H."/>
            <person name="Kato T."/>
            <person name="Asamizu E."/>
            <person name="Miyajima N."/>
            <person name="Sasamoto S."/>
            <person name="Kimura T."/>
            <person name="Hosouchi T."/>
            <person name="Kawashima K."/>
            <person name="Kohara M."/>
            <person name="Matsumoto M."/>
            <person name="Matsuno A."/>
            <person name="Muraki A."/>
            <person name="Nakayama S."/>
            <person name="Nakazaki N."/>
            <person name="Naruo K."/>
            <person name="Okumura S."/>
            <person name="Shinpo S."/>
            <person name="Takeuchi C."/>
            <person name="Wada T."/>
            <person name="Watanabe A."/>
            <person name="Yamada M."/>
            <person name="Yasuda M."/>
            <person name="Sato S."/>
            <person name="de la Bastide M."/>
            <person name="Huang E."/>
            <person name="Spiegel L."/>
            <person name="Gnoj L."/>
            <person name="O'Shaughnessy A."/>
            <person name="Preston R."/>
            <person name="Habermann K."/>
            <person name="Murray J."/>
            <person name="Johnson D."/>
            <person name="Rohlfing T."/>
            <person name="Nelson J."/>
            <person name="Stoneking T."/>
            <person name="Pepin K."/>
            <person name="Spieth J."/>
            <person name="Sekhon M."/>
            <person name="Armstrong J."/>
            <person name="Becker M."/>
            <person name="Belter E."/>
            <person name="Cordum H."/>
            <person name="Cordes M."/>
            <person name="Courtney L."/>
            <person name="Courtney W."/>
            <person name="Dante M."/>
            <person name="Du H."/>
            <person name="Edwards J."/>
            <person name="Fryman J."/>
            <person name="Haakensen B."/>
            <person name="Lamar E."/>
            <person name="Latreille P."/>
            <person name="Leonard S."/>
            <person name="Meyer R."/>
            <person name="Mulvaney E."/>
            <person name="Ozersky P."/>
            <person name="Riley A."/>
            <person name="Strowmatt C."/>
            <person name="Wagner-McPherson C."/>
            <person name="Wollam A."/>
            <person name="Yoakum M."/>
            <person name="Bell M."/>
            <person name="Dedhia N."/>
            <person name="Parnell L."/>
            <person name="Shah R."/>
            <person name="Rodriguez M."/>
            <person name="Hoon See L."/>
            <person name="Vil D."/>
            <person name="Baker J."/>
            <person name="Kirchoff K."/>
            <person name="Toth K."/>
            <person name="King L."/>
            <person name="Bahret A."/>
            <person name="Miller B."/>
            <person name="Marra M.A."/>
            <person name="Martienssen R."/>
            <person name="McCombie W.R."/>
            <person name="Wilson R.K."/>
            <person name="Murphy G."/>
            <person name="Bancroft I."/>
            <person name="Volckaert G."/>
            <person name="Wambutt R."/>
            <person name="Duesterhoeft A."/>
            <person name="Stiekema W."/>
            <person name="Pohl T."/>
            <person name="Entian K.-D."/>
            <person name="Terryn N."/>
            <person name="Hartley N."/>
            <person name="Bent E."/>
            <person name="Johnson S."/>
            <person name="Langham S.-A."/>
            <person name="McCullagh B."/>
            <person name="Robben J."/>
            <person name="Grymonprez B."/>
            <person name="Zimmermann W."/>
            <person name="Ramsperger U."/>
            <person name="Wedler H."/>
            <person name="Balke K."/>
            <person name="Wedler E."/>
            <person name="Peters S."/>
            <person name="van Staveren M."/>
            <person name="Dirkse W."/>
            <person name="Mooijman P."/>
            <person name="Klein Lankhorst R."/>
            <person name="Weitzenegger T."/>
            <person name="Bothe G."/>
            <person name="Rose M."/>
            <person name="Hauf J."/>
            <person name="Berneiser S."/>
            <person name="Hempel S."/>
            <person name="Feldpausch M."/>
            <person name="Lamberth S."/>
            <person name="Villarroel R."/>
            <person name="Gielen J."/>
            <person name="Ardiles W."/>
            <person name="Bents O."/>
            <person name="Lemcke K."/>
            <person name="Kolesov G."/>
            <person name="Mayer K.F.X."/>
            <person name="Rudd S."/>
            <person name="Schoof H."/>
            <person name="Schueller C."/>
            <person name="Zaccaria P."/>
            <person name="Mewes H.-W."/>
            <person name="Bevan M."/>
            <person name="Fransz P.F."/>
        </authorList>
    </citation>
    <scope>NUCLEOTIDE SEQUENCE [LARGE SCALE GENOMIC DNA]</scope>
    <source>
        <strain>cv. Columbia</strain>
    </source>
</reference>
<reference key="2">
    <citation type="journal article" date="2017" name="Plant J.">
        <title>Araport11: a complete reannotation of the Arabidopsis thaliana reference genome.</title>
        <authorList>
            <person name="Cheng C.Y."/>
            <person name="Krishnakumar V."/>
            <person name="Chan A.P."/>
            <person name="Thibaud-Nissen F."/>
            <person name="Schobel S."/>
            <person name="Town C.D."/>
        </authorList>
    </citation>
    <scope>GENOME REANNOTATION</scope>
    <source>
        <strain>cv. Columbia</strain>
    </source>
</reference>
<reference key="3">
    <citation type="journal article" date="2006" name="Plant Biotechnol. J.">
        <title>Simultaneous high-throughput recombinational cloning of open reading frames in closed and open configurations.</title>
        <authorList>
            <person name="Underwood B.A."/>
            <person name="Vanderhaeghen R."/>
            <person name="Whitford R."/>
            <person name="Town C.D."/>
            <person name="Hilson P."/>
        </authorList>
    </citation>
    <scope>NUCLEOTIDE SEQUENCE [LARGE SCALE MRNA]</scope>
    <source>
        <strain>cv. Columbia</strain>
    </source>
</reference>
<reference key="4">
    <citation type="submission" date="2002-03" db="EMBL/GenBank/DDBJ databases">
        <title>Full-length cDNA from Arabidopsis thaliana.</title>
        <authorList>
            <person name="Brover V.V."/>
            <person name="Troukhan M.E."/>
            <person name="Alexandrov N.A."/>
            <person name="Lu Y.-P."/>
            <person name="Flavell R.B."/>
            <person name="Feldmann K.A."/>
        </authorList>
    </citation>
    <scope>NUCLEOTIDE SEQUENCE [LARGE SCALE MRNA]</scope>
</reference>
<reference key="5">
    <citation type="journal article" date="2008" name="Trends Plant Sci.">
        <title>The plant B3 superfamily.</title>
        <authorList>
            <person name="Swaminathan K."/>
            <person name="Peterson K."/>
            <person name="Jack T."/>
        </authorList>
    </citation>
    <scope>GENE FAMILY</scope>
</reference>
<proteinExistence type="evidence at transcript level"/>